<protein>
    <recommendedName>
        <fullName>IPT/TIG domain-containing protein BACOVA_02650</fullName>
    </recommendedName>
</protein>
<feature type="signal peptide" evidence="1">
    <location>
        <begin position="1"/>
        <end position="27"/>
    </location>
</feature>
<feature type="chain" id="PRO_0000425885" description="IPT/TIG domain-containing protein BACOVA_02650">
    <location>
        <begin position="28"/>
        <end position="489"/>
    </location>
</feature>
<feature type="domain" description="IPT/TIG 1">
    <location>
        <begin position="57"/>
        <end position="103"/>
    </location>
</feature>
<feature type="domain" description="IPT/TIG 2">
    <location>
        <begin position="136"/>
        <end position="204"/>
    </location>
</feature>
<feature type="domain" description="IPT/TIG 3">
    <location>
        <begin position="232"/>
        <end position="304"/>
    </location>
</feature>
<feature type="lipid moiety-binding region" description="N-palmitoyl cysteine" evidence="1">
    <location>
        <position position="28"/>
    </location>
</feature>
<feature type="lipid moiety-binding region" description="S-diacylglycerol cysteine" evidence="1">
    <location>
        <position position="28"/>
    </location>
</feature>
<feature type="strand" evidence="5">
    <location>
        <begin position="38"/>
        <end position="43"/>
    </location>
</feature>
<feature type="strand" evidence="5">
    <location>
        <begin position="62"/>
        <end position="69"/>
    </location>
</feature>
<feature type="strand" evidence="5">
    <location>
        <begin position="75"/>
        <end position="78"/>
    </location>
</feature>
<feature type="strand" evidence="5">
    <location>
        <begin position="81"/>
        <end position="83"/>
    </location>
</feature>
<feature type="helix" evidence="5">
    <location>
        <begin position="87"/>
        <end position="89"/>
    </location>
</feature>
<feature type="strand" evidence="5">
    <location>
        <begin position="92"/>
        <end position="98"/>
    </location>
</feature>
<feature type="turn" evidence="5">
    <location>
        <begin position="106"/>
        <end position="108"/>
    </location>
</feature>
<feature type="strand" evidence="5">
    <location>
        <begin position="115"/>
        <end position="119"/>
    </location>
</feature>
<feature type="strand" evidence="5">
    <location>
        <begin position="124"/>
        <end position="128"/>
    </location>
</feature>
<feature type="strand" evidence="5">
    <location>
        <begin position="137"/>
        <end position="142"/>
    </location>
</feature>
<feature type="strand" evidence="5">
    <location>
        <begin position="152"/>
        <end position="158"/>
    </location>
</feature>
<feature type="strand" evidence="5">
    <location>
        <begin position="163"/>
        <end position="171"/>
    </location>
</feature>
<feature type="strand" evidence="5">
    <location>
        <begin position="189"/>
        <end position="191"/>
    </location>
</feature>
<feature type="strand" evidence="5">
    <location>
        <begin position="195"/>
        <end position="201"/>
    </location>
</feature>
<feature type="strand" evidence="5">
    <location>
        <begin position="208"/>
        <end position="218"/>
    </location>
</feature>
<feature type="strand" evidence="5">
    <location>
        <begin position="220"/>
        <end position="226"/>
    </location>
</feature>
<feature type="strand" evidence="6">
    <location>
        <begin position="233"/>
        <end position="238"/>
    </location>
</feature>
<feature type="strand" evidence="6">
    <location>
        <begin position="246"/>
        <end position="253"/>
    </location>
</feature>
<feature type="strand" evidence="6">
    <location>
        <begin position="260"/>
        <end position="263"/>
    </location>
</feature>
<feature type="turn" evidence="6">
    <location>
        <begin position="264"/>
        <end position="266"/>
    </location>
</feature>
<feature type="strand" evidence="6">
    <location>
        <begin position="267"/>
        <end position="269"/>
    </location>
</feature>
<feature type="helix" evidence="6">
    <location>
        <begin position="271"/>
        <end position="273"/>
    </location>
</feature>
<feature type="strand" evidence="6">
    <location>
        <begin position="280"/>
        <end position="286"/>
    </location>
</feature>
<feature type="strand" evidence="6">
    <location>
        <begin position="297"/>
        <end position="301"/>
    </location>
</feature>
<feature type="strand" evidence="6">
    <location>
        <begin position="304"/>
        <end position="307"/>
    </location>
</feature>
<feature type="helix" evidence="6">
    <location>
        <begin position="315"/>
        <end position="317"/>
    </location>
</feature>
<feature type="strand" evidence="6">
    <location>
        <begin position="318"/>
        <end position="320"/>
    </location>
</feature>
<feature type="strand" evidence="6">
    <location>
        <begin position="322"/>
        <end position="330"/>
    </location>
</feature>
<feature type="strand" evidence="6">
    <location>
        <begin position="334"/>
        <end position="337"/>
    </location>
</feature>
<feature type="strand" evidence="6">
    <location>
        <begin position="340"/>
        <end position="342"/>
    </location>
</feature>
<feature type="strand" evidence="6">
    <location>
        <begin position="348"/>
        <end position="358"/>
    </location>
</feature>
<feature type="strand" evidence="6">
    <location>
        <begin position="360"/>
        <end position="371"/>
    </location>
</feature>
<feature type="turn" evidence="6">
    <location>
        <begin position="377"/>
        <end position="379"/>
    </location>
</feature>
<feature type="helix" evidence="6">
    <location>
        <begin position="386"/>
        <end position="388"/>
    </location>
</feature>
<feature type="strand" evidence="6">
    <location>
        <begin position="389"/>
        <end position="399"/>
    </location>
</feature>
<feature type="strand" evidence="6">
    <location>
        <begin position="405"/>
        <end position="410"/>
    </location>
</feature>
<feature type="helix" evidence="6">
    <location>
        <begin position="414"/>
        <end position="416"/>
    </location>
</feature>
<feature type="strand" evidence="6">
    <location>
        <begin position="418"/>
        <end position="421"/>
    </location>
</feature>
<feature type="turn" evidence="6">
    <location>
        <begin position="426"/>
        <end position="428"/>
    </location>
</feature>
<feature type="strand" evidence="6">
    <location>
        <begin position="434"/>
        <end position="442"/>
    </location>
</feature>
<feature type="helix" evidence="6">
    <location>
        <begin position="443"/>
        <end position="445"/>
    </location>
</feature>
<feature type="helix" evidence="6">
    <location>
        <begin position="452"/>
        <end position="456"/>
    </location>
</feature>
<feature type="strand" evidence="6">
    <location>
        <begin position="462"/>
        <end position="469"/>
    </location>
</feature>
<feature type="strand" evidence="6">
    <location>
        <begin position="471"/>
        <end position="473"/>
    </location>
</feature>
<feature type="strand" evidence="6">
    <location>
        <begin position="475"/>
        <end position="488"/>
    </location>
</feature>
<reference key="1">
    <citation type="submission" date="2007-04" db="EMBL/GenBank/DDBJ databases">
        <title>Draft genome sequence of Bacteroides ovatus (ATCC 8483).</title>
        <authorList>
            <person name="Sudarsanam P."/>
            <person name="Ley R."/>
            <person name="Guruge J."/>
            <person name="Turnbaugh P.J."/>
            <person name="Mahowald M."/>
            <person name="Liep D."/>
            <person name="Gordon J."/>
        </authorList>
    </citation>
    <scope>NUCLEOTIDE SEQUENCE [LARGE SCALE GENOMIC DNA]</scope>
    <source>
        <strain>ATCC 8483 / DSM 1896 / JCM 5824 / BCRC 10623 / CCUG 4943 / NCTC 11153</strain>
    </source>
</reference>
<reference key="2">
    <citation type="journal article" date="2014" name="Nature">
        <title>A discrete genetic locus confers xyloglucan metabolism in select human gut Bacteroidetes.</title>
        <authorList>
            <person name="Larsbrink J."/>
            <person name="Rogers T.E."/>
            <person name="Hemsworth G.R."/>
            <person name="McKee L.S."/>
            <person name="Tauzin A.S."/>
            <person name="Spadiut O."/>
            <person name="Klinter S."/>
            <person name="Pudlo N.A."/>
            <person name="Urs K."/>
            <person name="Koropatkin N.M."/>
            <person name="Creagh A.L."/>
            <person name="Haynes C.A."/>
            <person name="Kelly A.G."/>
            <person name="Cederholm S.N."/>
            <person name="Davies G.J."/>
            <person name="Martens E.C."/>
            <person name="Brumer H."/>
        </authorList>
    </citation>
    <scope>FUNCTION</scope>
    <scope>PATHWAY</scope>
</reference>
<sequence length="489" mass="53393">MKSIYKYLDTRLFLIGLLVLPFLAVVSCQNDDDDAIPVIHYIRVTDPAKADSTFTDVNPGTMIVVVGEHLGGTQKVYINDQEVSFNRNYVTSTSIILTVPNELELTGQNPELKGEIRIETEHGVAAYNMHVLSPAPYITRISATYPIKPGDQMTVIGGNFYEVQAVYLSTEQPAKDGTRPVDVQEITNYEVNNKYSQITLTAPANLLEEGYLVVECYTSSAVTEFKKNGPKPVVTAVSSTMPVVGSTVTITGQNFIEVSRVNINGEFDIPVGDITTSNTFDEISFVLPQAPTQSGHISVTAIGGTVESAEIFYPLENVILNYDGIGSHVWGDCSFVVADGSSAPYVSNGTCLGITGTVSASNYWWKQSYSNAQWVNTSIIPGNIPIDDLKLQFECFVKEVFTGPVFQIAMCENFDAALNGYVPVSSFTGKTETGKWMQCSVSLSSVVADATYQDFLNRNSTHIGVYATNPGSSQATIEVYFDNFRIVRK</sequence>
<gene>
    <name type="ORF">BACOVA_02650</name>
</gene>
<dbReference type="EMBL" id="AAXF02000049">
    <property type="protein sequence ID" value="EDO11441.1"/>
    <property type="molecule type" value="Genomic_DNA"/>
</dbReference>
<dbReference type="RefSeq" id="WP_004298439.1">
    <property type="nucleotide sequence ID" value="NZ_DS264579.1"/>
</dbReference>
<dbReference type="PDB" id="5E7G">
    <property type="method" value="X-ray"/>
    <property type="resolution" value="2.37 A"/>
    <property type="chains" value="A=34-489"/>
</dbReference>
<dbReference type="PDB" id="5E7H">
    <property type="method" value="X-ray"/>
    <property type="resolution" value="1.57 A"/>
    <property type="chains" value="A=230-489"/>
</dbReference>
<dbReference type="PDBsum" id="5E7G"/>
<dbReference type="PDBsum" id="5E7H"/>
<dbReference type="SMR" id="A7LXT4"/>
<dbReference type="eggNOG" id="ENOG502Z8MW">
    <property type="taxonomic scope" value="Bacteria"/>
</dbReference>
<dbReference type="HOGENOM" id="CLU_044175_0_0_10"/>
<dbReference type="UniPathway" id="UPA01045"/>
<dbReference type="EvolutionaryTrace" id="A7LXT4"/>
<dbReference type="Proteomes" id="UP000005475">
    <property type="component" value="Unassembled WGS sequence"/>
</dbReference>
<dbReference type="GO" id="GO:0009279">
    <property type="term" value="C:cell outer membrane"/>
    <property type="evidence" value="ECO:0007669"/>
    <property type="project" value="UniProtKB-SubCell"/>
</dbReference>
<dbReference type="GO" id="GO:0030247">
    <property type="term" value="F:polysaccharide binding"/>
    <property type="evidence" value="ECO:0000314"/>
    <property type="project" value="UniProtKB"/>
</dbReference>
<dbReference type="GO" id="GO:0085030">
    <property type="term" value="P:symbiotic process benefiting host"/>
    <property type="evidence" value="ECO:0000314"/>
    <property type="project" value="UniProtKB"/>
</dbReference>
<dbReference type="GO" id="GO:2000899">
    <property type="term" value="P:xyloglucan catabolic process"/>
    <property type="evidence" value="ECO:0000314"/>
    <property type="project" value="UniProtKB"/>
</dbReference>
<dbReference type="Gene3D" id="2.60.40.10">
    <property type="entry name" value="Immunoglobulins"/>
    <property type="match status" value="3"/>
</dbReference>
<dbReference type="InterPro" id="IPR013783">
    <property type="entry name" value="Ig-like_fold"/>
</dbReference>
<dbReference type="InterPro" id="IPR014756">
    <property type="entry name" value="Ig_E-set"/>
</dbReference>
<dbReference type="InterPro" id="IPR002909">
    <property type="entry name" value="IPT_dom"/>
</dbReference>
<dbReference type="InterPro" id="IPR040475">
    <property type="entry name" value="SGBP_B_XBD"/>
</dbReference>
<dbReference type="Pfam" id="PF18329">
    <property type="entry name" value="SGBP_B_XBD"/>
    <property type="match status" value="1"/>
</dbReference>
<dbReference type="Pfam" id="PF01833">
    <property type="entry name" value="TIG"/>
    <property type="match status" value="1"/>
</dbReference>
<dbReference type="SUPFAM" id="SSF81296">
    <property type="entry name" value="E set domains"/>
    <property type="match status" value="2"/>
</dbReference>
<dbReference type="PROSITE" id="PS51257">
    <property type="entry name" value="PROKAR_LIPOPROTEIN"/>
    <property type="match status" value="1"/>
</dbReference>
<comment type="function">
    <text evidence="2">Polysaccharide-binding protein present at the surface of the cell. Probably mediates xyloglucan-binding before xyloglucan transport in the periplasm for degradation.</text>
</comment>
<comment type="pathway">
    <text evidence="2">Glucan metabolism; xyloglucan degradation.</text>
</comment>
<comment type="subcellular location">
    <subcellularLocation>
        <location evidence="3">Cell outer membrane</location>
        <topology evidence="3">Lipid-anchor</topology>
    </subcellularLocation>
    <text evidence="2">Cell outer membrane localization is predicted by analogy with the archetypal sus locus.</text>
</comment>
<comment type="miscellaneous">
    <text evidence="4">Gut bacteria supply the human body with energy from dietary polysaccharides through glycosidases that are absent in the human genome. Xyloglucans are a ubiquitous family of highly branched plant cell wall polysaccharides present in the vegetables we consume. Enzymes involved in xyloglucan degradation mediate the conversion of otherwise indigestible plant polysaccharides to short-chain fatty acids (PubMed:24463512).</text>
</comment>
<name>Y2650_BACO1</name>
<organism>
    <name type="scientific">Bacteroides ovatus (strain ATCC 8483 / DSM 1896 / JCM 5824 / BCRC 10623 / CCUG 4943 / NCTC 11153)</name>
    <dbReference type="NCBI Taxonomy" id="411476"/>
    <lineage>
        <taxon>Bacteria</taxon>
        <taxon>Pseudomonadati</taxon>
        <taxon>Bacteroidota</taxon>
        <taxon>Bacteroidia</taxon>
        <taxon>Bacteroidales</taxon>
        <taxon>Bacteroidaceae</taxon>
        <taxon>Bacteroides</taxon>
    </lineage>
</organism>
<evidence type="ECO:0000255" key="1">
    <source>
        <dbReference type="PROSITE-ProRule" id="PRU00303"/>
    </source>
</evidence>
<evidence type="ECO:0000269" key="2">
    <source>
    </source>
</evidence>
<evidence type="ECO:0000305" key="3"/>
<evidence type="ECO:0000305" key="4">
    <source>
    </source>
</evidence>
<evidence type="ECO:0007829" key="5">
    <source>
        <dbReference type="PDB" id="5E7G"/>
    </source>
</evidence>
<evidence type="ECO:0007829" key="6">
    <source>
        <dbReference type="PDB" id="5E7H"/>
    </source>
</evidence>
<accession>A7LXT4</accession>
<proteinExistence type="evidence at protein level"/>
<keyword id="KW-0002">3D-structure</keyword>
<keyword id="KW-0119">Carbohydrate metabolism</keyword>
<keyword id="KW-0998">Cell outer membrane</keyword>
<keyword id="KW-0449">Lipoprotein</keyword>
<keyword id="KW-0472">Membrane</keyword>
<keyword id="KW-0564">Palmitate</keyword>
<keyword id="KW-0677">Repeat</keyword>
<keyword id="KW-0732">Signal</keyword>